<gene>
    <name evidence="1" type="primary">mutS</name>
    <name type="ordered locus">Mpe_A2842</name>
</gene>
<protein>
    <recommendedName>
        <fullName evidence="1">DNA mismatch repair protein MutS</fullName>
    </recommendedName>
</protein>
<feature type="chain" id="PRO_0000335180" description="DNA mismatch repair protein MutS">
    <location>
        <begin position="1"/>
        <end position="870"/>
    </location>
</feature>
<feature type="binding site" evidence="1">
    <location>
        <begin position="622"/>
        <end position="629"/>
    </location>
    <ligand>
        <name>ATP</name>
        <dbReference type="ChEBI" id="CHEBI:30616"/>
    </ligand>
</feature>
<accession>A2SJQ7</accession>
<organism>
    <name type="scientific">Methylibium petroleiphilum (strain ATCC BAA-1232 / LMG 22953 / PM1)</name>
    <dbReference type="NCBI Taxonomy" id="420662"/>
    <lineage>
        <taxon>Bacteria</taxon>
        <taxon>Pseudomonadati</taxon>
        <taxon>Pseudomonadota</taxon>
        <taxon>Betaproteobacteria</taxon>
        <taxon>Burkholderiales</taxon>
        <taxon>Sphaerotilaceae</taxon>
        <taxon>Methylibium</taxon>
    </lineage>
</organism>
<proteinExistence type="inferred from homology"/>
<comment type="function">
    <text evidence="1">This protein is involved in the repair of mismatches in DNA. It is possible that it carries out the mismatch recognition step. This protein has a weak ATPase activity.</text>
</comment>
<comment type="similarity">
    <text evidence="1">Belongs to the DNA mismatch repair MutS family.</text>
</comment>
<keyword id="KW-0067">ATP-binding</keyword>
<keyword id="KW-0227">DNA damage</keyword>
<keyword id="KW-0234">DNA repair</keyword>
<keyword id="KW-0238">DNA-binding</keyword>
<keyword id="KW-0547">Nucleotide-binding</keyword>
<keyword id="KW-1185">Reference proteome</keyword>
<sequence length="870" mass="93941">MSADPARAESGHTPMMQQYLRIKAEHPDTLVLYRMGDFYELFFDDARKAHRLLDITLTSRGQSAGEPVVMAGVPVHALENYLGKLVKLGESVAIAEQVGDVATAKGPVERKVVRVVTPGTVTDTELLSERVDTLLLAVTRQRASYGLAWLGLSSGTLGLSECGERELAGWLARLGPAEVLVDDRDDAALTAALSTTRTALTRRPAWQFDTALGRRKLCEQLRVASLAGFNAEDVSAAHAAAAALLSYAEHTQGRALAHVGSLAVERASDLLELPPATHRNLELTQTLRGEDAPTLLSLLDVCRTGMGSRALRHWLTHPARVRTAARARHEAIGALMERGGEVLREALRGVSDVERITARIALRQVRPRELTGLRATLLALPALRDGVPRDSALLADLAQQLSPPPEIADLLQRAIADEPAVLLRDGGVIATGHDAALDELRGIAQNCEAFLLDLEARERNRTGIANLRVQFNRVHGFYIEVTQGQVDKVPADYQRRQTLKNAERYITPELKAFEDKALSAQERALAREKLLYDGVLDALQPQLAALGAVARALASLDALAALAERAAVLNWCCPEFVSQPCIEIEQGRHPVVEARLAETGGGSFIPNDCRLDANRRMLVITGPNMGGKSTFMRQVALVVLLAAMGSYVPAAACRLGPVDAIHTRIGAADDLANAQSTFMLEMTEAAAIVHGATEHSLVLMDEIGRGTSTFDGLALAGAIASQLHDRNRAFTLFATHYFELTAFPEKHPRALNVHVSAAESHTGHGDDIVFLHEIQPGPASRSYGVQVARLAGMPAPLLRQARATLEALEAQQAASASQIDLFAAPPPSPPREATELERALAGVEPDTLTPREALDALYRLKSLHERSKEN</sequence>
<evidence type="ECO:0000255" key="1">
    <source>
        <dbReference type="HAMAP-Rule" id="MF_00096"/>
    </source>
</evidence>
<name>MUTS_METPP</name>
<dbReference type="EMBL" id="CP000555">
    <property type="protein sequence ID" value="ABM95796.1"/>
    <property type="molecule type" value="Genomic_DNA"/>
</dbReference>
<dbReference type="RefSeq" id="WP_011830425.1">
    <property type="nucleotide sequence ID" value="NC_008825.1"/>
</dbReference>
<dbReference type="SMR" id="A2SJQ7"/>
<dbReference type="STRING" id="420662.Mpe_A2842"/>
<dbReference type="KEGG" id="mpt:Mpe_A2842"/>
<dbReference type="eggNOG" id="COG0249">
    <property type="taxonomic scope" value="Bacteria"/>
</dbReference>
<dbReference type="HOGENOM" id="CLU_002472_4_0_4"/>
<dbReference type="Proteomes" id="UP000000366">
    <property type="component" value="Chromosome"/>
</dbReference>
<dbReference type="GO" id="GO:0005829">
    <property type="term" value="C:cytosol"/>
    <property type="evidence" value="ECO:0007669"/>
    <property type="project" value="TreeGrafter"/>
</dbReference>
<dbReference type="GO" id="GO:0005524">
    <property type="term" value="F:ATP binding"/>
    <property type="evidence" value="ECO:0007669"/>
    <property type="project" value="UniProtKB-UniRule"/>
</dbReference>
<dbReference type="GO" id="GO:0140664">
    <property type="term" value="F:ATP-dependent DNA damage sensor activity"/>
    <property type="evidence" value="ECO:0007669"/>
    <property type="project" value="InterPro"/>
</dbReference>
<dbReference type="GO" id="GO:0003684">
    <property type="term" value="F:damaged DNA binding"/>
    <property type="evidence" value="ECO:0007669"/>
    <property type="project" value="UniProtKB-UniRule"/>
</dbReference>
<dbReference type="GO" id="GO:0030983">
    <property type="term" value="F:mismatched DNA binding"/>
    <property type="evidence" value="ECO:0007669"/>
    <property type="project" value="InterPro"/>
</dbReference>
<dbReference type="GO" id="GO:0006298">
    <property type="term" value="P:mismatch repair"/>
    <property type="evidence" value="ECO:0007669"/>
    <property type="project" value="UniProtKB-UniRule"/>
</dbReference>
<dbReference type="FunFam" id="1.10.1420.10:FF:000002">
    <property type="entry name" value="DNA mismatch repair protein MutS"/>
    <property type="match status" value="1"/>
</dbReference>
<dbReference type="FunFam" id="3.40.1170.10:FF:000001">
    <property type="entry name" value="DNA mismatch repair protein MutS"/>
    <property type="match status" value="1"/>
</dbReference>
<dbReference type="Gene3D" id="1.10.1420.10">
    <property type="match status" value="2"/>
</dbReference>
<dbReference type="Gene3D" id="6.10.140.430">
    <property type="match status" value="1"/>
</dbReference>
<dbReference type="Gene3D" id="3.40.1170.10">
    <property type="entry name" value="DNA repair protein MutS, domain I"/>
    <property type="match status" value="1"/>
</dbReference>
<dbReference type="Gene3D" id="3.30.420.110">
    <property type="entry name" value="MutS, connector domain"/>
    <property type="match status" value="1"/>
</dbReference>
<dbReference type="Gene3D" id="3.40.50.300">
    <property type="entry name" value="P-loop containing nucleotide triphosphate hydrolases"/>
    <property type="match status" value="1"/>
</dbReference>
<dbReference type="HAMAP" id="MF_00096">
    <property type="entry name" value="MutS"/>
    <property type="match status" value="1"/>
</dbReference>
<dbReference type="InterPro" id="IPR005748">
    <property type="entry name" value="DNA_mismatch_repair_MutS"/>
</dbReference>
<dbReference type="InterPro" id="IPR007695">
    <property type="entry name" value="DNA_mismatch_repair_MutS-lik_N"/>
</dbReference>
<dbReference type="InterPro" id="IPR017261">
    <property type="entry name" value="DNA_mismatch_repair_MutS/MSH"/>
</dbReference>
<dbReference type="InterPro" id="IPR000432">
    <property type="entry name" value="DNA_mismatch_repair_MutS_C"/>
</dbReference>
<dbReference type="InterPro" id="IPR007861">
    <property type="entry name" value="DNA_mismatch_repair_MutS_clamp"/>
</dbReference>
<dbReference type="InterPro" id="IPR007696">
    <property type="entry name" value="DNA_mismatch_repair_MutS_core"/>
</dbReference>
<dbReference type="InterPro" id="IPR016151">
    <property type="entry name" value="DNA_mismatch_repair_MutS_N"/>
</dbReference>
<dbReference type="InterPro" id="IPR036187">
    <property type="entry name" value="DNA_mismatch_repair_MutS_sf"/>
</dbReference>
<dbReference type="InterPro" id="IPR007860">
    <property type="entry name" value="DNA_mmatch_repair_MutS_con_dom"/>
</dbReference>
<dbReference type="InterPro" id="IPR045076">
    <property type="entry name" value="MutS"/>
</dbReference>
<dbReference type="InterPro" id="IPR036678">
    <property type="entry name" value="MutS_con_dom_sf"/>
</dbReference>
<dbReference type="InterPro" id="IPR027417">
    <property type="entry name" value="P-loop_NTPase"/>
</dbReference>
<dbReference type="NCBIfam" id="TIGR01070">
    <property type="entry name" value="mutS1"/>
    <property type="match status" value="1"/>
</dbReference>
<dbReference type="NCBIfam" id="NF003810">
    <property type="entry name" value="PRK05399.1"/>
    <property type="match status" value="1"/>
</dbReference>
<dbReference type="PANTHER" id="PTHR11361:SF34">
    <property type="entry name" value="DNA MISMATCH REPAIR PROTEIN MSH1, MITOCHONDRIAL"/>
    <property type="match status" value="1"/>
</dbReference>
<dbReference type="PANTHER" id="PTHR11361">
    <property type="entry name" value="DNA MISMATCH REPAIR PROTEIN MUTS FAMILY MEMBER"/>
    <property type="match status" value="1"/>
</dbReference>
<dbReference type="Pfam" id="PF01624">
    <property type="entry name" value="MutS_I"/>
    <property type="match status" value="1"/>
</dbReference>
<dbReference type="Pfam" id="PF05188">
    <property type="entry name" value="MutS_II"/>
    <property type="match status" value="1"/>
</dbReference>
<dbReference type="Pfam" id="PF05192">
    <property type="entry name" value="MutS_III"/>
    <property type="match status" value="1"/>
</dbReference>
<dbReference type="Pfam" id="PF05190">
    <property type="entry name" value="MutS_IV"/>
    <property type="match status" value="1"/>
</dbReference>
<dbReference type="Pfam" id="PF00488">
    <property type="entry name" value="MutS_V"/>
    <property type="match status" value="1"/>
</dbReference>
<dbReference type="PIRSF" id="PIRSF037677">
    <property type="entry name" value="DNA_mis_repair_Msh6"/>
    <property type="match status" value="1"/>
</dbReference>
<dbReference type="SMART" id="SM00534">
    <property type="entry name" value="MUTSac"/>
    <property type="match status" value="1"/>
</dbReference>
<dbReference type="SMART" id="SM00533">
    <property type="entry name" value="MUTSd"/>
    <property type="match status" value="1"/>
</dbReference>
<dbReference type="SUPFAM" id="SSF55271">
    <property type="entry name" value="DNA repair protein MutS, domain I"/>
    <property type="match status" value="1"/>
</dbReference>
<dbReference type="SUPFAM" id="SSF53150">
    <property type="entry name" value="DNA repair protein MutS, domain II"/>
    <property type="match status" value="1"/>
</dbReference>
<dbReference type="SUPFAM" id="SSF48334">
    <property type="entry name" value="DNA repair protein MutS, domain III"/>
    <property type="match status" value="1"/>
</dbReference>
<dbReference type="SUPFAM" id="SSF52540">
    <property type="entry name" value="P-loop containing nucleoside triphosphate hydrolases"/>
    <property type="match status" value="1"/>
</dbReference>
<dbReference type="PROSITE" id="PS00486">
    <property type="entry name" value="DNA_MISMATCH_REPAIR_2"/>
    <property type="match status" value="1"/>
</dbReference>
<reference key="1">
    <citation type="journal article" date="2007" name="J. Bacteriol.">
        <title>Whole-genome analysis of the methyl tert-butyl ether-degrading beta-proteobacterium Methylibium petroleiphilum PM1.</title>
        <authorList>
            <person name="Kane S.R."/>
            <person name="Chakicherla A.Y."/>
            <person name="Chain P.S.G."/>
            <person name="Schmidt R."/>
            <person name="Shin M.W."/>
            <person name="Legler T.C."/>
            <person name="Scow K.M."/>
            <person name="Larimer F.W."/>
            <person name="Lucas S.M."/>
            <person name="Richardson P.M."/>
            <person name="Hristova K.R."/>
        </authorList>
    </citation>
    <scope>NUCLEOTIDE SEQUENCE [LARGE SCALE GENOMIC DNA]</scope>
    <source>
        <strain>ATCC BAA-1232 / LMG 22953 / PM1</strain>
    </source>
</reference>